<dbReference type="EC" id="2.7.11.1"/>
<dbReference type="EMBL" id="BX538345">
    <property type="protein sequence ID" value="CAD98108.1"/>
    <property type="molecule type" value="mRNA"/>
</dbReference>
<dbReference type="EMBL" id="Z68339">
    <property type="status" value="NOT_ANNOTATED_CDS"/>
    <property type="molecule type" value="Genomic_DNA"/>
</dbReference>
<dbReference type="EMBL" id="Z69734">
    <property type="status" value="NOT_ANNOTATED_CDS"/>
    <property type="molecule type" value="Genomic_DNA"/>
</dbReference>
<dbReference type="EMBL" id="Z70274">
    <property type="status" value="NOT_ANNOTATED_CDS"/>
    <property type="molecule type" value="Genomic_DNA"/>
</dbReference>
<dbReference type="EMBL" id="Z83850">
    <property type="status" value="NOT_ANNOTATED_CDS"/>
    <property type="molecule type" value="Genomic_DNA"/>
</dbReference>
<dbReference type="EMBL" id="BC108702">
    <property type="protein sequence ID" value="AAI08703.1"/>
    <property type="molecule type" value="mRNA"/>
</dbReference>
<dbReference type="EMBL" id="AK131549">
    <property type="protein sequence ID" value="BAD18683.1"/>
    <property type="molecule type" value="mRNA"/>
</dbReference>
<dbReference type="CCDS" id="CCDS65305.1">
    <molecule id="Q7Z2Y5-1"/>
</dbReference>
<dbReference type="RefSeq" id="NP_940867.2">
    <molecule id="Q7Z2Y5-1"/>
    <property type="nucleotide sequence ID" value="NM_198465.4"/>
</dbReference>
<dbReference type="SMR" id="Q7Z2Y5"/>
<dbReference type="BioGRID" id="128472">
    <property type="interactions" value="4"/>
</dbReference>
<dbReference type="FunCoup" id="Q7Z2Y5">
    <property type="interactions" value="21"/>
</dbReference>
<dbReference type="IntAct" id="Q7Z2Y5">
    <property type="interactions" value="2"/>
</dbReference>
<dbReference type="MINT" id="Q7Z2Y5"/>
<dbReference type="STRING" id="9606.ENSP00000434830"/>
<dbReference type="GlyCosmos" id="Q7Z2Y5">
    <property type="glycosylation" value="2 sites, 1 glycan"/>
</dbReference>
<dbReference type="GlyGen" id="Q7Z2Y5">
    <property type="glycosylation" value="3 sites, 1 O-linked glycan (3 sites)"/>
</dbReference>
<dbReference type="iPTMnet" id="Q7Z2Y5"/>
<dbReference type="PhosphoSitePlus" id="Q7Z2Y5"/>
<dbReference type="BioMuta" id="NRK"/>
<dbReference type="DMDM" id="115502506"/>
<dbReference type="CPTAC" id="non-CPTAC-5656"/>
<dbReference type="jPOST" id="Q7Z2Y5"/>
<dbReference type="MassIVE" id="Q7Z2Y5"/>
<dbReference type="PaxDb" id="9606-ENSP00000434830"/>
<dbReference type="PeptideAtlas" id="Q7Z2Y5"/>
<dbReference type="ProteomicsDB" id="68985">
    <molecule id="Q7Z2Y5-1"/>
</dbReference>
<dbReference type="ProteomicsDB" id="68986">
    <molecule id="Q7Z2Y5-2"/>
</dbReference>
<dbReference type="ProteomicsDB" id="68987">
    <molecule id="Q7Z2Y5-3"/>
</dbReference>
<dbReference type="Antibodypedia" id="2074">
    <property type="antibodies" value="67 antibodies from 20 providers"/>
</dbReference>
<dbReference type="DNASU" id="203447"/>
<dbReference type="Ensembl" id="ENST00000243300.14">
    <molecule id="Q7Z2Y5-1"/>
    <property type="protein sequence ID" value="ENSP00000434830.1"/>
    <property type="gene ID" value="ENSG00000123572.17"/>
</dbReference>
<dbReference type="Ensembl" id="ENST00000536164.5">
    <molecule id="Q7Z2Y5-3"/>
    <property type="protein sequence ID" value="ENSP00000438785.1"/>
    <property type="gene ID" value="ENSG00000123572.17"/>
</dbReference>
<dbReference type="GeneID" id="203447"/>
<dbReference type="KEGG" id="hsa:203447"/>
<dbReference type="MANE-Select" id="ENST00000243300.14">
    <property type="protein sequence ID" value="ENSP00000434830.1"/>
    <property type="RefSeq nucleotide sequence ID" value="NM_198465.4"/>
    <property type="RefSeq protein sequence ID" value="NP_940867.2"/>
</dbReference>
<dbReference type="UCSC" id="uc065ans.1">
    <molecule id="Q7Z2Y5-1"/>
    <property type="organism name" value="human"/>
</dbReference>
<dbReference type="AGR" id="HGNC:25391"/>
<dbReference type="CTD" id="203447"/>
<dbReference type="DisGeNET" id="203447"/>
<dbReference type="GeneCards" id="NRK"/>
<dbReference type="HGNC" id="HGNC:25391">
    <property type="gene designation" value="NRK"/>
</dbReference>
<dbReference type="HPA" id="ENSG00000123572">
    <property type="expression patterns" value="Tissue enhanced (adrenal gland, ovary, placenta)"/>
</dbReference>
<dbReference type="MIM" id="300791">
    <property type="type" value="gene"/>
</dbReference>
<dbReference type="neXtProt" id="NX_Q7Z2Y5"/>
<dbReference type="OpenTargets" id="ENSG00000123572"/>
<dbReference type="PharmGKB" id="PA134869113"/>
<dbReference type="VEuPathDB" id="HostDB:ENSG00000123572"/>
<dbReference type="eggNOG" id="KOG0587">
    <property type="taxonomic scope" value="Eukaryota"/>
</dbReference>
<dbReference type="GeneTree" id="ENSGT00940000161533"/>
<dbReference type="HOGENOM" id="CLU_001831_2_0_1"/>
<dbReference type="InParanoid" id="Q7Z2Y5"/>
<dbReference type="OrthoDB" id="8693905at2759"/>
<dbReference type="PAN-GO" id="Q7Z2Y5">
    <property type="GO annotations" value="7 GO annotations based on evolutionary models"/>
</dbReference>
<dbReference type="PhylomeDB" id="Q7Z2Y5"/>
<dbReference type="PathwayCommons" id="Q7Z2Y5"/>
<dbReference type="SignaLink" id="Q7Z2Y5"/>
<dbReference type="SIGNOR" id="Q7Z2Y5"/>
<dbReference type="BioGRID-ORCS" id="203447">
    <property type="hits" value="25 hits in 788 CRISPR screens"/>
</dbReference>
<dbReference type="ChiTaRS" id="NRK">
    <property type="organism name" value="human"/>
</dbReference>
<dbReference type="GeneWiki" id="NRK_(gene)"/>
<dbReference type="GenomeRNAi" id="203447"/>
<dbReference type="Pharos" id="Q7Z2Y5">
    <property type="development level" value="Tdark"/>
</dbReference>
<dbReference type="PRO" id="PR:Q7Z2Y5"/>
<dbReference type="Proteomes" id="UP000005640">
    <property type="component" value="Chromosome X"/>
</dbReference>
<dbReference type="RNAct" id="Q7Z2Y5">
    <property type="molecule type" value="protein"/>
</dbReference>
<dbReference type="Bgee" id="ENSG00000123572">
    <property type="expression patterns" value="Expressed in tibia and 123 other cell types or tissues"/>
</dbReference>
<dbReference type="ExpressionAtlas" id="Q7Z2Y5">
    <property type="expression patterns" value="baseline and differential"/>
</dbReference>
<dbReference type="GO" id="GO:0005524">
    <property type="term" value="F:ATP binding"/>
    <property type="evidence" value="ECO:0007669"/>
    <property type="project" value="UniProtKB-KW"/>
</dbReference>
<dbReference type="GO" id="GO:0004672">
    <property type="term" value="F:protein kinase activity"/>
    <property type="evidence" value="ECO:0000318"/>
    <property type="project" value="GO_Central"/>
</dbReference>
<dbReference type="GO" id="GO:0106310">
    <property type="term" value="F:protein serine kinase activity"/>
    <property type="evidence" value="ECO:0007669"/>
    <property type="project" value="RHEA"/>
</dbReference>
<dbReference type="GO" id="GO:0004674">
    <property type="term" value="F:protein serine/threonine kinase activity"/>
    <property type="evidence" value="ECO:0007669"/>
    <property type="project" value="UniProtKB-KW"/>
</dbReference>
<dbReference type="GO" id="GO:0046330">
    <property type="term" value="P:positive regulation of JNK cascade"/>
    <property type="evidence" value="ECO:0000318"/>
    <property type="project" value="GO_Central"/>
</dbReference>
<dbReference type="FunFam" id="3.30.200.20:FF:000355">
    <property type="entry name" value="Nik related kinase"/>
    <property type="match status" value="1"/>
</dbReference>
<dbReference type="FunFam" id="1.10.510.10:FF:000435">
    <property type="entry name" value="Nik-related protein kinase"/>
    <property type="match status" value="1"/>
</dbReference>
<dbReference type="Gene3D" id="3.30.200.20">
    <property type="entry name" value="Phosphorylase Kinase, domain 1"/>
    <property type="match status" value="1"/>
</dbReference>
<dbReference type="Gene3D" id="1.10.510.10">
    <property type="entry name" value="Transferase(Phosphotransferase) domain 1"/>
    <property type="match status" value="1"/>
</dbReference>
<dbReference type="InterPro" id="IPR001180">
    <property type="entry name" value="CNH_dom"/>
</dbReference>
<dbReference type="InterPro" id="IPR011009">
    <property type="entry name" value="Kinase-like_dom_sf"/>
</dbReference>
<dbReference type="InterPro" id="IPR000719">
    <property type="entry name" value="Prot_kinase_dom"/>
</dbReference>
<dbReference type="InterPro" id="IPR017441">
    <property type="entry name" value="Protein_kinase_ATP_BS"/>
</dbReference>
<dbReference type="InterPro" id="IPR008271">
    <property type="entry name" value="Ser/Thr_kinase_AS"/>
</dbReference>
<dbReference type="InterPro" id="IPR051700">
    <property type="entry name" value="STE20_Ser-Thr_kinase"/>
</dbReference>
<dbReference type="PANTHER" id="PTHR47096">
    <property type="entry name" value="MISSHAPEN LIKE KINASE 1"/>
    <property type="match status" value="1"/>
</dbReference>
<dbReference type="PANTHER" id="PTHR47096:SF2">
    <property type="entry name" value="NIK-RELATED PROTEIN KINASE"/>
    <property type="match status" value="1"/>
</dbReference>
<dbReference type="Pfam" id="PF00780">
    <property type="entry name" value="CNH"/>
    <property type="match status" value="1"/>
</dbReference>
<dbReference type="Pfam" id="PF00069">
    <property type="entry name" value="Pkinase"/>
    <property type="match status" value="1"/>
</dbReference>
<dbReference type="SMART" id="SM00036">
    <property type="entry name" value="CNH"/>
    <property type="match status" value="1"/>
</dbReference>
<dbReference type="SMART" id="SM00220">
    <property type="entry name" value="S_TKc"/>
    <property type="match status" value="1"/>
</dbReference>
<dbReference type="SUPFAM" id="SSF56112">
    <property type="entry name" value="Protein kinase-like (PK-like)"/>
    <property type="match status" value="1"/>
</dbReference>
<dbReference type="PROSITE" id="PS50219">
    <property type="entry name" value="CNH"/>
    <property type="match status" value="1"/>
</dbReference>
<dbReference type="PROSITE" id="PS00107">
    <property type="entry name" value="PROTEIN_KINASE_ATP"/>
    <property type="match status" value="1"/>
</dbReference>
<dbReference type="PROSITE" id="PS50011">
    <property type="entry name" value="PROTEIN_KINASE_DOM"/>
    <property type="match status" value="1"/>
</dbReference>
<dbReference type="PROSITE" id="PS00108">
    <property type="entry name" value="PROTEIN_KINASE_ST"/>
    <property type="match status" value="1"/>
</dbReference>
<feature type="chain" id="PRO_0000250511" description="Nik-related protein kinase">
    <location>
        <begin position="1"/>
        <end position="1582"/>
    </location>
</feature>
<feature type="domain" description="Protein kinase" evidence="3">
    <location>
        <begin position="25"/>
        <end position="313"/>
    </location>
</feature>
<feature type="domain" description="CNH" evidence="4">
    <location>
        <begin position="1209"/>
        <end position="1552"/>
    </location>
</feature>
<feature type="region of interest" description="Disordered" evidence="6">
    <location>
        <begin position="492"/>
        <end position="579"/>
    </location>
</feature>
<feature type="region of interest" description="Disordered" evidence="6">
    <location>
        <begin position="783"/>
        <end position="859"/>
    </location>
</feature>
<feature type="region of interest" description="Disordered" evidence="6">
    <location>
        <begin position="926"/>
        <end position="1156"/>
    </location>
</feature>
<feature type="coiled-coil region" evidence="2">
    <location>
        <begin position="725"/>
        <end position="759"/>
    </location>
</feature>
<feature type="compositionally biased region" description="Low complexity" evidence="6">
    <location>
        <begin position="492"/>
        <end position="507"/>
    </location>
</feature>
<feature type="compositionally biased region" description="Low complexity" evidence="6">
    <location>
        <begin position="527"/>
        <end position="538"/>
    </location>
</feature>
<feature type="compositionally biased region" description="Low complexity" evidence="6">
    <location>
        <begin position="551"/>
        <end position="572"/>
    </location>
</feature>
<feature type="compositionally biased region" description="Polar residues" evidence="6">
    <location>
        <begin position="803"/>
        <end position="814"/>
    </location>
</feature>
<feature type="compositionally biased region" description="Polar residues" evidence="6">
    <location>
        <begin position="825"/>
        <end position="834"/>
    </location>
</feature>
<feature type="compositionally biased region" description="Polar residues" evidence="6">
    <location>
        <begin position="850"/>
        <end position="859"/>
    </location>
</feature>
<feature type="compositionally biased region" description="Acidic residues" evidence="6">
    <location>
        <begin position="926"/>
        <end position="944"/>
    </location>
</feature>
<feature type="compositionally biased region" description="Basic and acidic residues" evidence="6">
    <location>
        <begin position="965"/>
        <end position="978"/>
    </location>
</feature>
<feature type="compositionally biased region" description="Basic and acidic residues" evidence="6">
    <location>
        <begin position="999"/>
        <end position="1016"/>
    </location>
</feature>
<feature type="compositionally biased region" description="Basic and acidic residues" evidence="6">
    <location>
        <begin position="1043"/>
        <end position="1061"/>
    </location>
</feature>
<feature type="compositionally biased region" description="Basic and acidic residues" evidence="6">
    <location>
        <begin position="1125"/>
        <end position="1135"/>
    </location>
</feature>
<feature type="compositionally biased region" description="Polar residues" evidence="6">
    <location>
        <begin position="1136"/>
        <end position="1154"/>
    </location>
</feature>
<feature type="active site" description="Proton acceptor" evidence="3 5">
    <location>
        <position position="177"/>
    </location>
</feature>
<feature type="binding site" evidence="3">
    <location>
        <begin position="31"/>
        <end position="39"/>
    </location>
    <ligand>
        <name>ATP</name>
        <dbReference type="ChEBI" id="CHEBI:30616"/>
    </ligand>
</feature>
<feature type="binding site" evidence="3">
    <location>
        <position position="54"/>
    </location>
    <ligand>
        <name>ATP</name>
        <dbReference type="ChEBI" id="CHEBI:30616"/>
    </ligand>
</feature>
<feature type="modified residue" description="Phosphoserine" evidence="11">
    <location>
        <position position="852"/>
    </location>
</feature>
<feature type="modified residue" description="Phosphoserine" evidence="11">
    <location>
        <position position="855"/>
    </location>
</feature>
<feature type="modified residue" description="Phosphoserine" evidence="11">
    <location>
        <position position="1027"/>
    </location>
</feature>
<feature type="modified residue" description="Phosphoserine" evidence="11">
    <location>
        <position position="1031"/>
    </location>
</feature>
<feature type="modified residue" description="Phosphoserine" evidence="11">
    <location>
        <position position="1034"/>
    </location>
</feature>
<feature type="splice variant" id="VSP_020654" description="In isoform 2." evidence="8">
    <location>
        <begin position="1"/>
        <end position="332"/>
    </location>
</feature>
<feature type="splice variant" id="VSP_020655" description="In isoform 3." evidence="9">
    <original>GLAHLHAHRVIHRDIKGQNVLLTHN</original>
    <variation>PKVIFLGTGCSDSSLKKELCLKHQN</variation>
    <location>
        <begin position="164"/>
        <end position="188"/>
    </location>
</feature>
<feature type="splice variant" id="VSP_020656" description="In isoform 3." evidence="9">
    <location>
        <begin position="189"/>
        <end position="1582"/>
    </location>
</feature>
<feature type="splice variant" id="VSP_020657" description="In isoform 2." evidence="8">
    <original>IIKKRQ</original>
    <variation>MFFSFV</variation>
    <location>
        <begin position="333"/>
        <end position="338"/>
    </location>
</feature>
<feature type="sequence variant" id="VAR_040951" description="In dbSNP:rs55862725." evidence="7">
    <original>Q</original>
    <variation>H</variation>
    <location>
        <position position="355"/>
    </location>
</feature>
<feature type="sequence variant" id="VAR_033908" description="In dbSNP:rs209373." evidence="7">
    <original>V</original>
    <variation>M</variation>
    <location>
        <position position="358"/>
    </location>
</feature>
<feature type="sequence variant" id="VAR_040952" description="In a breast infiltrating ductal carcinoma sample; somatic mutation." evidence="7">
    <original>S</original>
    <variation>C</variation>
    <location>
        <position position="424"/>
    </location>
</feature>
<feature type="sequence variant" id="VAR_040953" description="In dbSNP:rs55635933." evidence="7">
    <original>P</original>
    <variation>A</variation>
    <location>
        <position position="426"/>
    </location>
</feature>
<feature type="sequence variant" id="VAR_040954" description="In dbSNP:rs56350428." evidence="7">
    <original>E</original>
    <variation>G</variation>
    <location>
        <position position="579"/>
    </location>
</feature>
<feature type="sequence variant" id="VAR_040955" description="In dbSNP:rs35115195." evidence="7">
    <original>E</original>
    <variation>G</variation>
    <location>
        <position position="679"/>
    </location>
</feature>
<feature type="sequence variant" id="VAR_051653" description="In dbSNP:rs33936206.">
    <original>R</original>
    <variation>H</variation>
    <location>
        <position position="727"/>
    </location>
</feature>
<feature type="sequence variant" id="VAR_040956" description="In a colorectal adenocarcinoma sample; somatic mutation; dbSNP:rs764355898." evidence="7">
    <original>I</original>
    <variation>L</variation>
    <location>
        <position position="880"/>
    </location>
</feature>
<feature type="sequence variant" id="VAR_040957" description="In dbSNP:rs35334892." evidence="7">
    <original>D</original>
    <variation>G</variation>
    <location>
        <position position="971"/>
    </location>
</feature>
<feature type="sequence variant" id="VAR_033909" description="In dbSNP:rs16984889.">
    <original>A</original>
    <variation>E</variation>
    <location>
        <position position="993"/>
    </location>
</feature>
<feature type="sequence variant" id="VAR_040958" description="In dbSNP:rs35393519." evidence="7">
    <original>P</original>
    <variation>S</variation>
    <location>
        <position position="1106"/>
    </location>
</feature>
<feature type="sequence variant" id="VAR_040959" description="In dbSNP:rs35720774." evidence="7">
    <original>A</original>
    <variation>P</variation>
    <location>
        <position position="1121"/>
    </location>
</feature>
<feature type="sequence variant" id="VAR_040960" description="In dbSNP:rs35942881." evidence="7">
    <original>H</original>
    <variation>L</variation>
    <location>
        <position position="1276"/>
    </location>
</feature>
<feature type="sequence variant" id="VAR_040961" description="In dbSNP:rs34232354." evidence="7">
    <original>G</original>
    <variation>A</variation>
    <location>
        <position position="1471"/>
    </location>
</feature>
<feature type="sequence variant" id="VAR_040962" description="In dbSNP:rs35609510." evidence="7">
    <original>M</original>
    <variation>L</variation>
    <location>
        <position position="1472"/>
    </location>
</feature>
<feature type="sequence conflict" description="In Ref. 1; CAD98108." evidence="10" ref="1">
    <original>D</original>
    <variation>G</variation>
    <location>
        <position position="152"/>
    </location>
</feature>
<feature type="sequence conflict" description="In Ref. 1; CAD98108." evidence="10" ref="1">
    <original>G</original>
    <variation>S</variation>
    <location>
        <position position="522"/>
    </location>
</feature>
<feature type="sequence conflict" description="In Ref. 1; CAD98108." evidence="10" ref="1">
    <original>E</original>
    <variation>G</variation>
    <location>
        <position position="572"/>
    </location>
</feature>
<feature type="sequence conflict" description="In Ref. 1; CAD98108." evidence="10" ref="1">
    <original>R</original>
    <variation>G</variation>
    <location>
        <position position="705"/>
    </location>
</feature>
<feature type="sequence conflict" description="In Ref. 1; CAD98108." evidence="10" ref="1">
    <original>S</original>
    <variation>P</variation>
    <location>
        <position position="1138"/>
    </location>
</feature>
<sequence length="1582" mass="178479">MAGPGGWRDREVTDLGHLPDPTGIFSLDKTIGLGTYGRIYLGLHEKTGAFTAVKVMNARKTPLPEIGRRVRVNKYQKSVGWRYSDEEEDLRTELNLLRKYSFHKNIVSFYGAFFKLSPPGQRHQLWMVMELCAAGSVTDVVRMTSNQSLKEDWIAYICREILQGLAHLHAHRVIHRDIKGQNVLLTHNAEVKLVDFGVSAQVSRTNGRRNSFIGTPYWMAPEVIDCDEDPRRSYDYRSDVWSVGITAIEMAEGAPPLCNLQPLEALFVILRESAPTVKSSGWSRKFHNFMEKCTIKNFLFRPTSANMLQHPFVRDIKNERHVVESLTRHLTGIIKKRQKKGIPLIFEREEAIKEQYTVRRFRGPSCTHELLRLPTSSRCRPLRVLHGEPSQPRWLPDREEPQVQALQQLQGAARVFMPLQALDSAPKPLKGQAQAPQRLQGAARVFMPLQAQVKAKASKPLQMQIKAPPRLRRAARVLMPLQAQVRAPRLLQVQSQVSKKQQAQTQTSEPQDLDQVPEEFQGQDQVPEQQRQGQAPEQQQRHNQVPEQELEQNQAPEQPEVQEQAAEPAQAETEAEEPESLRVNAQVFLPLLSQDHHVLLPLHLDTQVLIPVEGQTEGSPQAQAWTLEPPQAIGSVQALIEGLSRDLLRAPNSNNSKPLGPLQTLMENLSSNRFYSQPEQAREKKSKVSTLRQALAKRLSPKRFRAKSSWRPEKLELSDLEARRQRRQRRWEDIFNQHEEELRQVDKDKEDESSDNDEVFHSIQAEVQIEPLKPYISNPKKIEVQERSPSVPNNQDHAHHVKFSSSVPQRSLLEQAQKPIDIRQRSSQNRQNWLAASESSSEEESPVTGRRSQSSPPYSTIDQKLLVDIHVPDGFKVGKISPPVYLTNEWVGYNALSEIFRNDWLTPAPVIQPPEEDGDYVELYDASADTDGDDDDESNDTFEDTYDHANGNDDLDNQVDQANDVCKDHDDDNNKFVDDVNNNYYEAPSCPRASYGRDGSCKQDGYDGSRGKEEAYRGYGSHTANRSHGGSAASEDNAAIGDQEEHAANIGSERRGSEGDGGKGVVRTSEESGALGLNGEENCSETDGPGLKRPASQDFEYLQEEPGGGNEASNAIDSGAAPSAPDHESDNKDISESSTQSDFSANHSSPSKGSGMSADANFASAILYAGFVEVPEESPKQPSEVNVNPLYVSPACKKPLIHMYEKEFTSEICCGSLWGVNLLLGTRSNLYLMDRSGKADITKLIRRRPFRQIQVLEPLNLLITISGHKNRLRVYHLTWLRNKILNNDPESKRRQEEMLKTEEACKAIDKLTGCEHFSVLQHEETTYIAIALKSSIHLYAWAPKSFDESTAIKVCIDQSADSEGDYMSYQAYIRILAKIQAADPVNRFKRPDELLHLLKLKVFPTLDHKPVTVDLAIGSEKRLKIFFSSADGYHLIDAESEVMSDVTLPKNPLEIIIPQNIIILPDCLGIGMMLTFNAEALSVEANEQLFKKILEMWKDIPSSIAFECTQRTTGWGQKAIEVRSLQSRVLESELKRRSIKKLRFLCTRGDKLFFTSTLRNHHSRVYFMTLGKLEELQSNYDV</sequence>
<name>NRK_HUMAN</name>
<gene>
    <name type="primary">NRK</name>
</gene>
<organism>
    <name type="scientific">Homo sapiens</name>
    <name type="common">Human</name>
    <dbReference type="NCBI Taxonomy" id="9606"/>
    <lineage>
        <taxon>Eukaryota</taxon>
        <taxon>Metazoa</taxon>
        <taxon>Chordata</taxon>
        <taxon>Craniata</taxon>
        <taxon>Vertebrata</taxon>
        <taxon>Euteleostomi</taxon>
        <taxon>Mammalia</taxon>
        <taxon>Eutheria</taxon>
        <taxon>Euarchontoglires</taxon>
        <taxon>Primates</taxon>
        <taxon>Haplorrhini</taxon>
        <taxon>Catarrhini</taxon>
        <taxon>Hominidae</taxon>
        <taxon>Homo</taxon>
    </lineage>
</organism>
<accession>Q7Z2Y5</accession>
<accession>Q32ND6</accession>
<accession>Q5H9K2</accession>
<accession>Q6ZMP2</accession>
<protein>
    <recommendedName>
        <fullName>Nik-related protein kinase</fullName>
        <ecNumber>2.7.11.1</ecNumber>
    </recommendedName>
</protein>
<proteinExistence type="evidence at protein level"/>
<comment type="function">
    <text evidence="1">May phosphorylate cofilin-1 and induce actin polymerization through this process, during the late stages of embryogenesis. Involved in the TNF-alpha-induced signaling pathway (By similarity).</text>
</comment>
<comment type="catalytic activity">
    <reaction>
        <text>L-seryl-[protein] + ATP = O-phospho-L-seryl-[protein] + ADP + H(+)</text>
        <dbReference type="Rhea" id="RHEA:17989"/>
        <dbReference type="Rhea" id="RHEA-COMP:9863"/>
        <dbReference type="Rhea" id="RHEA-COMP:11604"/>
        <dbReference type="ChEBI" id="CHEBI:15378"/>
        <dbReference type="ChEBI" id="CHEBI:29999"/>
        <dbReference type="ChEBI" id="CHEBI:30616"/>
        <dbReference type="ChEBI" id="CHEBI:83421"/>
        <dbReference type="ChEBI" id="CHEBI:456216"/>
        <dbReference type="EC" id="2.7.11.1"/>
    </reaction>
</comment>
<comment type="catalytic activity">
    <reaction>
        <text>L-threonyl-[protein] + ATP = O-phospho-L-threonyl-[protein] + ADP + H(+)</text>
        <dbReference type="Rhea" id="RHEA:46608"/>
        <dbReference type="Rhea" id="RHEA-COMP:11060"/>
        <dbReference type="Rhea" id="RHEA-COMP:11605"/>
        <dbReference type="ChEBI" id="CHEBI:15378"/>
        <dbReference type="ChEBI" id="CHEBI:30013"/>
        <dbReference type="ChEBI" id="CHEBI:30616"/>
        <dbReference type="ChEBI" id="CHEBI:61977"/>
        <dbReference type="ChEBI" id="CHEBI:456216"/>
        <dbReference type="EC" id="2.7.11.1"/>
    </reaction>
</comment>
<comment type="alternative products">
    <event type="alternative splicing"/>
    <isoform>
        <id>Q7Z2Y5-1</id>
        <name>1</name>
        <sequence type="displayed"/>
    </isoform>
    <isoform>
        <id>Q7Z2Y5-2</id>
        <name>2</name>
        <sequence type="described" ref="VSP_020654 VSP_020657"/>
    </isoform>
    <isoform>
        <id>Q7Z2Y5-3</id>
        <name>3</name>
        <sequence type="described" ref="VSP_020655 VSP_020656"/>
    </isoform>
</comment>
<comment type="similarity">
    <text evidence="10">Belongs to the protein kinase superfamily. STE Ser/Thr protein kinase family. STE20 subfamily.</text>
</comment>
<evidence type="ECO:0000250" key="1"/>
<evidence type="ECO:0000255" key="2"/>
<evidence type="ECO:0000255" key="3">
    <source>
        <dbReference type="PROSITE-ProRule" id="PRU00159"/>
    </source>
</evidence>
<evidence type="ECO:0000255" key="4">
    <source>
        <dbReference type="PROSITE-ProRule" id="PRU00795"/>
    </source>
</evidence>
<evidence type="ECO:0000255" key="5">
    <source>
        <dbReference type="PROSITE-ProRule" id="PRU10027"/>
    </source>
</evidence>
<evidence type="ECO:0000256" key="6">
    <source>
        <dbReference type="SAM" id="MobiDB-lite"/>
    </source>
</evidence>
<evidence type="ECO:0000269" key="7">
    <source>
    </source>
</evidence>
<evidence type="ECO:0000303" key="8">
    <source>
    </source>
</evidence>
<evidence type="ECO:0000303" key="9">
    <source>
    </source>
</evidence>
<evidence type="ECO:0000305" key="10"/>
<evidence type="ECO:0007744" key="11">
    <source>
    </source>
</evidence>
<reference key="1">
    <citation type="journal article" date="2007" name="BMC Genomics">
        <title>The full-ORF clone resource of the German cDNA consortium.</title>
        <authorList>
            <person name="Bechtel S."/>
            <person name="Rosenfelder H."/>
            <person name="Duda A."/>
            <person name="Schmidt C.P."/>
            <person name="Ernst U."/>
            <person name="Wellenreuther R."/>
            <person name="Mehrle A."/>
            <person name="Schuster C."/>
            <person name="Bahr A."/>
            <person name="Bloecker H."/>
            <person name="Heubner D."/>
            <person name="Hoerlein A."/>
            <person name="Michel G."/>
            <person name="Wedler H."/>
            <person name="Koehrer K."/>
            <person name="Ottenwaelder B."/>
            <person name="Poustka A."/>
            <person name="Wiemann S."/>
            <person name="Schupp I."/>
        </authorList>
    </citation>
    <scope>NUCLEOTIDE SEQUENCE [LARGE SCALE MRNA] (ISOFORM 1)</scope>
    <source>
        <tissue>Fetal kidney</tissue>
    </source>
</reference>
<reference key="2">
    <citation type="journal article" date="2005" name="Nature">
        <title>The DNA sequence of the human X chromosome.</title>
        <authorList>
            <person name="Ross M.T."/>
            <person name="Grafham D.V."/>
            <person name="Coffey A.J."/>
            <person name="Scherer S."/>
            <person name="McLay K."/>
            <person name="Muzny D."/>
            <person name="Platzer M."/>
            <person name="Howell G.R."/>
            <person name="Burrows C."/>
            <person name="Bird C.P."/>
            <person name="Frankish A."/>
            <person name="Lovell F.L."/>
            <person name="Howe K.L."/>
            <person name="Ashurst J.L."/>
            <person name="Fulton R.S."/>
            <person name="Sudbrak R."/>
            <person name="Wen G."/>
            <person name="Jones M.C."/>
            <person name="Hurles M.E."/>
            <person name="Andrews T.D."/>
            <person name="Scott C.E."/>
            <person name="Searle S."/>
            <person name="Ramser J."/>
            <person name="Whittaker A."/>
            <person name="Deadman R."/>
            <person name="Carter N.P."/>
            <person name="Hunt S.E."/>
            <person name="Chen R."/>
            <person name="Cree A."/>
            <person name="Gunaratne P."/>
            <person name="Havlak P."/>
            <person name="Hodgson A."/>
            <person name="Metzker M.L."/>
            <person name="Richards S."/>
            <person name="Scott G."/>
            <person name="Steffen D."/>
            <person name="Sodergren E."/>
            <person name="Wheeler D.A."/>
            <person name="Worley K.C."/>
            <person name="Ainscough R."/>
            <person name="Ambrose K.D."/>
            <person name="Ansari-Lari M.A."/>
            <person name="Aradhya S."/>
            <person name="Ashwell R.I."/>
            <person name="Babbage A.K."/>
            <person name="Bagguley C.L."/>
            <person name="Ballabio A."/>
            <person name="Banerjee R."/>
            <person name="Barker G.E."/>
            <person name="Barlow K.F."/>
            <person name="Barrett I.P."/>
            <person name="Bates K.N."/>
            <person name="Beare D.M."/>
            <person name="Beasley H."/>
            <person name="Beasley O."/>
            <person name="Beck A."/>
            <person name="Bethel G."/>
            <person name="Blechschmidt K."/>
            <person name="Brady N."/>
            <person name="Bray-Allen S."/>
            <person name="Bridgeman A.M."/>
            <person name="Brown A.J."/>
            <person name="Brown M.J."/>
            <person name="Bonnin D."/>
            <person name="Bruford E.A."/>
            <person name="Buhay C."/>
            <person name="Burch P."/>
            <person name="Burford D."/>
            <person name="Burgess J."/>
            <person name="Burrill W."/>
            <person name="Burton J."/>
            <person name="Bye J.M."/>
            <person name="Carder C."/>
            <person name="Carrel L."/>
            <person name="Chako J."/>
            <person name="Chapman J.C."/>
            <person name="Chavez D."/>
            <person name="Chen E."/>
            <person name="Chen G."/>
            <person name="Chen Y."/>
            <person name="Chen Z."/>
            <person name="Chinault C."/>
            <person name="Ciccodicola A."/>
            <person name="Clark S.Y."/>
            <person name="Clarke G."/>
            <person name="Clee C.M."/>
            <person name="Clegg S."/>
            <person name="Clerc-Blankenburg K."/>
            <person name="Clifford K."/>
            <person name="Cobley V."/>
            <person name="Cole C.G."/>
            <person name="Conquer J.S."/>
            <person name="Corby N."/>
            <person name="Connor R.E."/>
            <person name="David R."/>
            <person name="Davies J."/>
            <person name="Davis C."/>
            <person name="Davis J."/>
            <person name="Delgado O."/>
            <person name="Deshazo D."/>
            <person name="Dhami P."/>
            <person name="Ding Y."/>
            <person name="Dinh H."/>
            <person name="Dodsworth S."/>
            <person name="Draper H."/>
            <person name="Dugan-Rocha S."/>
            <person name="Dunham A."/>
            <person name="Dunn M."/>
            <person name="Durbin K.J."/>
            <person name="Dutta I."/>
            <person name="Eades T."/>
            <person name="Ellwood M."/>
            <person name="Emery-Cohen A."/>
            <person name="Errington H."/>
            <person name="Evans K.L."/>
            <person name="Faulkner L."/>
            <person name="Francis F."/>
            <person name="Frankland J."/>
            <person name="Fraser A.E."/>
            <person name="Galgoczy P."/>
            <person name="Gilbert J."/>
            <person name="Gill R."/>
            <person name="Gloeckner G."/>
            <person name="Gregory S.G."/>
            <person name="Gribble S."/>
            <person name="Griffiths C."/>
            <person name="Grocock R."/>
            <person name="Gu Y."/>
            <person name="Gwilliam R."/>
            <person name="Hamilton C."/>
            <person name="Hart E.A."/>
            <person name="Hawes A."/>
            <person name="Heath P.D."/>
            <person name="Heitmann K."/>
            <person name="Hennig S."/>
            <person name="Hernandez J."/>
            <person name="Hinzmann B."/>
            <person name="Ho S."/>
            <person name="Hoffs M."/>
            <person name="Howden P.J."/>
            <person name="Huckle E.J."/>
            <person name="Hume J."/>
            <person name="Hunt P.J."/>
            <person name="Hunt A.R."/>
            <person name="Isherwood J."/>
            <person name="Jacob L."/>
            <person name="Johnson D."/>
            <person name="Jones S."/>
            <person name="de Jong P.J."/>
            <person name="Joseph S.S."/>
            <person name="Keenan S."/>
            <person name="Kelly S."/>
            <person name="Kershaw J.K."/>
            <person name="Khan Z."/>
            <person name="Kioschis P."/>
            <person name="Klages S."/>
            <person name="Knights A.J."/>
            <person name="Kosiura A."/>
            <person name="Kovar-Smith C."/>
            <person name="Laird G.K."/>
            <person name="Langford C."/>
            <person name="Lawlor S."/>
            <person name="Leversha M."/>
            <person name="Lewis L."/>
            <person name="Liu W."/>
            <person name="Lloyd C."/>
            <person name="Lloyd D.M."/>
            <person name="Loulseged H."/>
            <person name="Loveland J.E."/>
            <person name="Lovell J.D."/>
            <person name="Lozado R."/>
            <person name="Lu J."/>
            <person name="Lyne R."/>
            <person name="Ma J."/>
            <person name="Maheshwari M."/>
            <person name="Matthews L.H."/>
            <person name="McDowall J."/>
            <person name="McLaren S."/>
            <person name="McMurray A."/>
            <person name="Meidl P."/>
            <person name="Meitinger T."/>
            <person name="Milne S."/>
            <person name="Miner G."/>
            <person name="Mistry S.L."/>
            <person name="Morgan M."/>
            <person name="Morris S."/>
            <person name="Mueller I."/>
            <person name="Mullikin J.C."/>
            <person name="Nguyen N."/>
            <person name="Nordsiek G."/>
            <person name="Nyakatura G."/>
            <person name="O'dell C.N."/>
            <person name="Okwuonu G."/>
            <person name="Palmer S."/>
            <person name="Pandian R."/>
            <person name="Parker D."/>
            <person name="Parrish J."/>
            <person name="Pasternak S."/>
            <person name="Patel D."/>
            <person name="Pearce A.V."/>
            <person name="Pearson D.M."/>
            <person name="Pelan S.E."/>
            <person name="Perez L."/>
            <person name="Porter K.M."/>
            <person name="Ramsey Y."/>
            <person name="Reichwald K."/>
            <person name="Rhodes S."/>
            <person name="Ridler K.A."/>
            <person name="Schlessinger D."/>
            <person name="Schueler M.G."/>
            <person name="Sehra H.K."/>
            <person name="Shaw-Smith C."/>
            <person name="Shen H."/>
            <person name="Sheridan E.M."/>
            <person name="Shownkeen R."/>
            <person name="Skuce C.D."/>
            <person name="Smith M.L."/>
            <person name="Sotheran E.C."/>
            <person name="Steingruber H.E."/>
            <person name="Steward C.A."/>
            <person name="Storey R."/>
            <person name="Swann R.M."/>
            <person name="Swarbreck D."/>
            <person name="Tabor P.E."/>
            <person name="Taudien S."/>
            <person name="Taylor T."/>
            <person name="Teague B."/>
            <person name="Thomas K."/>
            <person name="Thorpe A."/>
            <person name="Timms K."/>
            <person name="Tracey A."/>
            <person name="Trevanion S."/>
            <person name="Tromans A.C."/>
            <person name="d'Urso M."/>
            <person name="Verduzco D."/>
            <person name="Villasana D."/>
            <person name="Waldron L."/>
            <person name="Wall M."/>
            <person name="Wang Q."/>
            <person name="Warren J."/>
            <person name="Warry G.L."/>
            <person name="Wei X."/>
            <person name="West A."/>
            <person name="Whitehead S.L."/>
            <person name="Whiteley M.N."/>
            <person name="Wilkinson J.E."/>
            <person name="Willey D.L."/>
            <person name="Williams G."/>
            <person name="Williams L."/>
            <person name="Williamson A."/>
            <person name="Williamson H."/>
            <person name="Wilming L."/>
            <person name="Woodmansey R.L."/>
            <person name="Wray P.W."/>
            <person name="Yen J."/>
            <person name="Zhang J."/>
            <person name="Zhou J."/>
            <person name="Zoghbi H."/>
            <person name="Zorilla S."/>
            <person name="Buck D."/>
            <person name="Reinhardt R."/>
            <person name="Poustka A."/>
            <person name="Rosenthal A."/>
            <person name="Lehrach H."/>
            <person name="Meindl A."/>
            <person name="Minx P.J."/>
            <person name="Hillier L.W."/>
            <person name="Willard H.F."/>
            <person name="Wilson R.K."/>
            <person name="Waterston R.H."/>
            <person name="Rice C.M."/>
            <person name="Vaudin M."/>
            <person name="Coulson A."/>
            <person name="Nelson D.L."/>
            <person name="Weinstock G."/>
            <person name="Sulston J.E."/>
            <person name="Durbin R.M."/>
            <person name="Hubbard T."/>
            <person name="Gibbs R.A."/>
            <person name="Beck S."/>
            <person name="Rogers J."/>
            <person name="Bentley D.R."/>
        </authorList>
    </citation>
    <scope>NUCLEOTIDE SEQUENCE [LARGE SCALE GENOMIC DNA]</scope>
</reference>
<reference key="3">
    <citation type="journal article" date="2004" name="Genome Res.">
        <title>The status, quality, and expansion of the NIH full-length cDNA project: the Mammalian Gene Collection (MGC).</title>
        <authorList>
            <consortium name="The MGC Project Team"/>
        </authorList>
    </citation>
    <scope>NUCLEOTIDE SEQUENCE [LARGE SCALE MRNA] (ISOFORM 3)</scope>
    <source>
        <tissue>Ovary</tissue>
    </source>
</reference>
<reference key="4">
    <citation type="journal article" date="2004" name="Nat. Genet.">
        <title>Complete sequencing and characterization of 21,243 full-length human cDNAs.</title>
        <authorList>
            <person name="Ota T."/>
            <person name="Suzuki Y."/>
            <person name="Nishikawa T."/>
            <person name="Otsuki T."/>
            <person name="Sugiyama T."/>
            <person name="Irie R."/>
            <person name="Wakamatsu A."/>
            <person name="Hayashi K."/>
            <person name="Sato H."/>
            <person name="Nagai K."/>
            <person name="Kimura K."/>
            <person name="Makita H."/>
            <person name="Sekine M."/>
            <person name="Obayashi M."/>
            <person name="Nishi T."/>
            <person name="Shibahara T."/>
            <person name="Tanaka T."/>
            <person name="Ishii S."/>
            <person name="Yamamoto J."/>
            <person name="Saito K."/>
            <person name="Kawai Y."/>
            <person name="Isono Y."/>
            <person name="Nakamura Y."/>
            <person name="Nagahari K."/>
            <person name="Murakami K."/>
            <person name="Yasuda T."/>
            <person name="Iwayanagi T."/>
            <person name="Wagatsuma M."/>
            <person name="Shiratori A."/>
            <person name="Sudo H."/>
            <person name="Hosoiri T."/>
            <person name="Kaku Y."/>
            <person name="Kodaira H."/>
            <person name="Kondo H."/>
            <person name="Sugawara M."/>
            <person name="Takahashi M."/>
            <person name="Kanda K."/>
            <person name="Yokoi T."/>
            <person name="Furuya T."/>
            <person name="Kikkawa E."/>
            <person name="Omura Y."/>
            <person name="Abe K."/>
            <person name="Kamihara K."/>
            <person name="Katsuta N."/>
            <person name="Sato K."/>
            <person name="Tanikawa M."/>
            <person name="Yamazaki M."/>
            <person name="Ninomiya K."/>
            <person name="Ishibashi T."/>
            <person name="Yamashita H."/>
            <person name="Murakawa K."/>
            <person name="Fujimori K."/>
            <person name="Tanai H."/>
            <person name="Kimata M."/>
            <person name="Watanabe M."/>
            <person name="Hiraoka S."/>
            <person name="Chiba Y."/>
            <person name="Ishida S."/>
            <person name="Ono Y."/>
            <person name="Takiguchi S."/>
            <person name="Watanabe S."/>
            <person name="Yosida M."/>
            <person name="Hotuta T."/>
            <person name="Kusano J."/>
            <person name="Kanehori K."/>
            <person name="Takahashi-Fujii A."/>
            <person name="Hara H."/>
            <person name="Tanase T.-O."/>
            <person name="Nomura Y."/>
            <person name="Togiya S."/>
            <person name="Komai F."/>
            <person name="Hara R."/>
            <person name="Takeuchi K."/>
            <person name="Arita M."/>
            <person name="Imose N."/>
            <person name="Musashino K."/>
            <person name="Yuuki H."/>
            <person name="Oshima A."/>
            <person name="Sasaki N."/>
            <person name="Aotsuka S."/>
            <person name="Yoshikawa Y."/>
            <person name="Matsunawa H."/>
            <person name="Ichihara T."/>
            <person name="Shiohata N."/>
            <person name="Sano S."/>
            <person name="Moriya S."/>
            <person name="Momiyama H."/>
            <person name="Satoh N."/>
            <person name="Takami S."/>
            <person name="Terashima Y."/>
            <person name="Suzuki O."/>
            <person name="Nakagawa S."/>
            <person name="Senoh A."/>
            <person name="Mizoguchi H."/>
            <person name="Goto Y."/>
            <person name="Shimizu F."/>
            <person name="Wakebe H."/>
            <person name="Hishigaki H."/>
            <person name="Watanabe T."/>
            <person name="Sugiyama A."/>
            <person name="Takemoto M."/>
            <person name="Kawakami B."/>
            <person name="Yamazaki M."/>
            <person name="Watanabe K."/>
            <person name="Kumagai A."/>
            <person name="Itakura S."/>
            <person name="Fukuzumi Y."/>
            <person name="Fujimori Y."/>
            <person name="Komiyama M."/>
            <person name="Tashiro H."/>
            <person name="Tanigami A."/>
            <person name="Fujiwara T."/>
            <person name="Ono T."/>
            <person name="Yamada K."/>
            <person name="Fujii Y."/>
            <person name="Ozaki K."/>
            <person name="Hirao M."/>
            <person name="Ohmori Y."/>
            <person name="Kawabata A."/>
            <person name="Hikiji T."/>
            <person name="Kobatake N."/>
            <person name="Inagaki H."/>
            <person name="Ikema Y."/>
            <person name="Okamoto S."/>
            <person name="Okitani R."/>
            <person name="Kawakami T."/>
            <person name="Noguchi S."/>
            <person name="Itoh T."/>
            <person name="Shigeta K."/>
            <person name="Senba T."/>
            <person name="Matsumura K."/>
            <person name="Nakajima Y."/>
            <person name="Mizuno T."/>
            <person name="Morinaga M."/>
            <person name="Sasaki M."/>
            <person name="Togashi T."/>
            <person name="Oyama M."/>
            <person name="Hata H."/>
            <person name="Watanabe M."/>
            <person name="Komatsu T."/>
            <person name="Mizushima-Sugano J."/>
            <person name="Satoh T."/>
            <person name="Shirai Y."/>
            <person name="Takahashi Y."/>
            <person name="Nakagawa K."/>
            <person name="Okumura K."/>
            <person name="Nagase T."/>
            <person name="Nomura N."/>
            <person name="Kikuchi H."/>
            <person name="Masuho Y."/>
            <person name="Yamashita R."/>
            <person name="Nakai K."/>
            <person name="Yada T."/>
            <person name="Nakamura Y."/>
            <person name="Ohara O."/>
            <person name="Isogai T."/>
            <person name="Sugano S."/>
        </authorList>
    </citation>
    <scope>NUCLEOTIDE SEQUENCE [LARGE SCALE MRNA] OF 1-1291 (ISOFORM 2)</scope>
    <source>
        <tissue>Placenta</tissue>
    </source>
</reference>
<reference key="5">
    <citation type="journal article" date="2011" name="Sci. Signal.">
        <title>System-wide temporal characterization of the proteome and phosphoproteome of human embryonic stem cell differentiation.</title>
        <authorList>
            <person name="Rigbolt K.T."/>
            <person name="Prokhorova T.A."/>
            <person name="Akimov V."/>
            <person name="Henningsen J."/>
            <person name="Johansen P.T."/>
            <person name="Kratchmarova I."/>
            <person name="Kassem M."/>
            <person name="Mann M."/>
            <person name="Olsen J.V."/>
            <person name="Blagoev B."/>
        </authorList>
    </citation>
    <scope>PHOSPHORYLATION [LARGE SCALE ANALYSIS] AT SER-852; SER-855; SER-1027; SER-1031 AND SER-1034</scope>
    <scope>IDENTIFICATION BY MASS SPECTROMETRY [LARGE SCALE ANALYSIS]</scope>
</reference>
<reference key="6">
    <citation type="journal article" date="2007" name="Nature">
        <title>Patterns of somatic mutation in human cancer genomes.</title>
        <authorList>
            <person name="Greenman C."/>
            <person name="Stephens P."/>
            <person name="Smith R."/>
            <person name="Dalgliesh G.L."/>
            <person name="Hunter C."/>
            <person name="Bignell G."/>
            <person name="Davies H."/>
            <person name="Teague J."/>
            <person name="Butler A."/>
            <person name="Stevens C."/>
            <person name="Edkins S."/>
            <person name="O'Meara S."/>
            <person name="Vastrik I."/>
            <person name="Schmidt E.E."/>
            <person name="Avis T."/>
            <person name="Barthorpe S."/>
            <person name="Bhamra G."/>
            <person name="Buck G."/>
            <person name="Choudhury B."/>
            <person name="Clements J."/>
            <person name="Cole J."/>
            <person name="Dicks E."/>
            <person name="Forbes S."/>
            <person name="Gray K."/>
            <person name="Halliday K."/>
            <person name="Harrison R."/>
            <person name="Hills K."/>
            <person name="Hinton J."/>
            <person name="Jenkinson A."/>
            <person name="Jones D."/>
            <person name="Menzies A."/>
            <person name="Mironenko T."/>
            <person name="Perry J."/>
            <person name="Raine K."/>
            <person name="Richardson D."/>
            <person name="Shepherd R."/>
            <person name="Small A."/>
            <person name="Tofts C."/>
            <person name="Varian J."/>
            <person name="Webb T."/>
            <person name="West S."/>
            <person name="Widaa S."/>
            <person name="Yates A."/>
            <person name="Cahill D.P."/>
            <person name="Louis D.N."/>
            <person name="Goldstraw P."/>
            <person name="Nicholson A.G."/>
            <person name="Brasseur F."/>
            <person name="Looijenga L."/>
            <person name="Weber B.L."/>
            <person name="Chiew Y.-E."/>
            <person name="DeFazio A."/>
            <person name="Greaves M.F."/>
            <person name="Green A.R."/>
            <person name="Campbell P."/>
            <person name="Birney E."/>
            <person name="Easton D.F."/>
            <person name="Chenevix-Trench G."/>
            <person name="Tan M.-H."/>
            <person name="Khoo S.K."/>
            <person name="Teh B.T."/>
            <person name="Yuen S.T."/>
            <person name="Leung S.Y."/>
            <person name="Wooster R."/>
            <person name="Futreal P.A."/>
            <person name="Stratton M.R."/>
        </authorList>
    </citation>
    <scope>VARIANTS [LARGE SCALE ANALYSIS] HIS-355; MET-358; CYS-424; ALA-426; GLY-579; GLY-679; LEU-880; GLY-971; SER-1106; PRO-1121; LEU-1276; ALA-1471 AND LEU-1472</scope>
</reference>
<keyword id="KW-0025">Alternative splicing</keyword>
<keyword id="KW-0067">ATP-binding</keyword>
<keyword id="KW-0175">Coiled coil</keyword>
<keyword id="KW-0418">Kinase</keyword>
<keyword id="KW-0547">Nucleotide-binding</keyword>
<keyword id="KW-0597">Phosphoprotein</keyword>
<keyword id="KW-1267">Proteomics identification</keyword>
<keyword id="KW-1185">Reference proteome</keyword>
<keyword id="KW-0723">Serine/threonine-protein kinase</keyword>
<keyword id="KW-0808">Transferase</keyword>